<accession>C4B644</accession>
<reference key="1">
    <citation type="journal article" date="2009" name="Biochem. Biophys. Res. Commun.">
        <title>Purification, characterization, and directed evolution study of a vitamin D3 hydroxylase from Pseudonocardia autotrophica.</title>
        <authorList>
            <person name="Fujii Y."/>
            <person name="Kabumoto H."/>
            <person name="Nishimura K."/>
            <person name="Fujii T."/>
            <person name="Yanai S."/>
            <person name="Takeda K."/>
            <person name="Tamura N."/>
            <person name="Arisawa A."/>
            <person name="Tamura T."/>
        </authorList>
    </citation>
    <scope>NUCLEOTIDE SEQUENCE [GENOMIC DNA]</scope>
    <scope>PROTEIN SEQUENCE OF 2-28 AND 187-198</scope>
    <scope>FUNCTION</scope>
    <scope>CATALYTIC ACTIVITY</scope>
    <scope>ACTIVITY REGULATION</scope>
    <scope>BIOPHYSICOCHEMICAL PROPERTIES</scope>
    <scope>MUTAGENESIS OF THR-70; VAL-156; GLU-216 AND GLU-384</scope>
    <source>
        <strain>ATCC 19727 / DSM 535 / CBS 466.68 / JCM 4348 / NBRC 12743 / NCIMB 9810 / NRRL B-11275 / ISP 5011</strain>
    </source>
</reference>
<protein>
    <recommendedName>
        <fullName evidence="4 6">Vitamin D(3) 25-hydroxylase</fullName>
        <ecNumber evidence="3">1.14.15.15</ecNumber>
    </recommendedName>
    <alternativeName>
        <fullName evidence="1">Cytochrome P450</fullName>
    </alternativeName>
</protein>
<feature type="initiator methionine" description="Removed" evidence="3">
    <location>
        <position position="1"/>
    </location>
</feature>
<feature type="chain" id="PRO_0000383672" description="Vitamin D(3) 25-hydroxylase" evidence="3">
    <location>
        <begin position="2"/>
        <end position="403"/>
    </location>
</feature>
<feature type="binding site" description="axial binding residue" evidence="1">
    <location>
        <position position="347"/>
    </location>
    <ligand>
        <name>heme</name>
        <dbReference type="ChEBI" id="CHEBI:30413"/>
    </ligand>
    <ligandPart>
        <name>Fe</name>
        <dbReference type="ChEBI" id="CHEBI:18248"/>
    </ligandPart>
</feature>
<feature type="mutagenesis site" description="Increases 25-hydroxylase activity 2.0-fold. Increases 25-hydroxylase activity 21.6-fold; when associated with V156L, E216M and E348R." evidence="3">
    <original>T</original>
    <variation>R</variation>
    <location>
        <position position="70"/>
    </location>
</feature>
<feature type="mutagenesis site" description="Increases 25-hydroxylase activity 21.6-fold; when associated with T70R; E216M and E348R." evidence="3">
    <original>V</original>
    <variation>L</variation>
    <location>
        <position position="156"/>
    </location>
</feature>
<feature type="mutagenesis site" description="Increases 25-hydroxylase activity 2.5-fold." evidence="3">
    <original>V</original>
    <variation>S</variation>
    <location>
        <position position="156"/>
    </location>
</feature>
<feature type="mutagenesis site" description="Increases 25-hydroxylase activity 1.9-fold." evidence="3">
    <original>E</original>
    <variation>A</variation>
    <location>
        <position position="216"/>
    </location>
</feature>
<feature type="mutagenesis site" description="Increases 25-hydroxylase activity 21.6-fold; when associated with T70R; V156L and E348R." evidence="3">
    <original>E</original>
    <variation>M</variation>
    <location>
        <position position="216"/>
    </location>
</feature>
<feature type="mutagenesis site" description="Increases 25-hydroxylase activity 2.8-fold. Increases 25-hydroxylase activity 21.6-fold; when associated with T70R; V156L and E216M." evidence="3">
    <original>E</original>
    <variation>R</variation>
    <location>
        <position position="384"/>
    </location>
</feature>
<feature type="sequence conflict" description="In Ref. 1; AA sequence." evidence="5" ref="1">
    <location>
        <begin position="4"/>
        <end position="6"/>
    </location>
</feature>
<feature type="sequence conflict" description="In Ref. 1; AA sequence." evidence="5" ref="1">
    <original>T</original>
    <variation>F</variation>
    <location>
        <position position="17"/>
    </location>
</feature>
<feature type="sequence conflict" description="In Ref. 1; AA sequence." evidence="5" ref="1">
    <original>HPA</original>
    <variation>QPP</variation>
    <location>
        <begin position="23"/>
        <end position="25"/>
    </location>
</feature>
<feature type="strand" evidence="11">
    <location>
        <begin position="7"/>
        <end position="9"/>
    </location>
</feature>
<feature type="strand" evidence="7">
    <location>
        <begin position="13"/>
        <end position="15"/>
    </location>
</feature>
<feature type="helix" evidence="7">
    <location>
        <begin position="16"/>
        <end position="18"/>
    </location>
</feature>
<feature type="helix" evidence="7">
    <location>
        <begin position="23"/>
        <end position="32"/>
    </location>
</feature>
<feature type="strand" evidence="7">
    <location>
        <begin position="34"/>
        <end position="40"/>
    </location>
</feature>
<feature type="strand" evidence="7">
    <location>
        <begin position="43"/>
        <end position="48"/>
    </location>
</feature>
<feature type="helix" evidence="7">
    <location>
        <begin position="51"/>
        <end position="58"/>
    </location>
</feature>
<feature type="strand" evidence="7">
    <location>
        <begin position="63"/>
        <end position="65"/>
    </location>
</feature>
<feature type="helix" evidence="7">
    <location>
        <begin position="67"/>
        <end position="70"/>
    </location>
</feature>
<feature type="helix" evidence="7">
    <location>
        <begin position="73"/>
        <end position="75"/>
    </location>
</feature>
<feature type="turn" evidence="8">
    <location>
        <begin position="76"/>
        <end position="78"/>
    </location>
</feature>
<feature type="helix" evidence="7">
    <location>
        <begin position="87"/>
        <end position="89"/>
    </location>
</feature>
<feature type="helix" evidence="7">
    <location>
        <begin position="94"/>
        <end position="103"/>
    </location>
</feature>
<feature type="helix" evidence="9">
    <location>
        <begin position="104"/>
        <end position="106"/>
    </location>
</feature>
<feature type="helix" evidence="7">
    <location>
        <begin position="108"/>
        <end position="128"/>
    </location>
</feature>
<feature type="strand" evidence="7">
    <location>
        <begin position="131"/>
        <end position="133"/>
    </location>
</feature>
<feature type="helix" evidence="7">
    <location>
        <begin position="137"/>
        <end position="140"/>
    </location>
</feature>
<feature type="turn" evidence="7">
    <location>
        <begin position="141"/>
        <end position="144"/>
    </location>
</feature>
<feature type="helix" evidence="7">
    <location>
        <begin position="145"/>
        <end position="154"/>
    </location>
</feature>
<feature type="helix" evidence="7">
    <location>
        <begin position="158"/>
        <end position="160"/>
    </location>
</feature>
<feature type="helix" evidence="7">
    <location>
        <begin position="161"/>
        <end position="171"/>
    </location>
</feature>
<feature type="strand" evidence="10">
    <location>
        <begin position="172"/>
        <end position="175"/>
    </location>
</feature>
<feature type="turn" evidence="7">
    <location>
        <begin position="177"/>
        <end position="179"/>
    </location>
</feature>
<feature type="helix" evidence="7">
    <location>
        <begin position="180"/>
        <end position="200"/>
    </location>
</feature>
<feature type="helix" evidence="7">
    <location>
        <begin position="206"/>
        <end position="212"/>
    </location>
</feature>
<feature type="turn" evidence="8">
    <location>
        <begin position="218"/>
        <end position="220"/>
    </location>
</feature>
<feature type="helix" evidence="7">
    <location>
        <begin position="223"/>
        <end position="237"/>
    </location>
</feature>
<feature type="helix" evidence="7">
    <location>
        <begin position="239"/>
        <end position="253"/>
    </location>
</feature>
<feature type="helix" evidence="7">
    <location>
        <begin position="256"/>
        <end position="264"/>
    </location>
</feature>
<feature type="helix" evidence="7">
    <location>
        <begin position="266"/>
        <end position="268"/>
    </location>
</feature>
<feature type="helix" evidence="7">
    <location>
        <begin position="269"/>
        <end position="279"/>
    </location>
</feature>
<feature type="strand" evidence="11">
    <location>
        <begin position="282"/>
        <end position="285"/>
    </location>
</feature>
<feature type="strand" evidence="7">
    <location>
        <begin position="289"/>
        <end position="293"/>
    </location>
</feature>
<feature type="strand" evidence="7">
    <location>
        <begin position="295"/>
        <end position="297"/>
    </location>
</feature>
<feature type="strand" evidence="7">
    <location>
        <begin position="300"/>
        <end position="302"/>
    </location>
</feature>
<feature type="strand" evidence="7">
    <location>
        <begin position="307"/>
        <end position="311"/>
    </location>
</feature>
<feature type="helix" evidence="7">
    <location>
        <begin position="312"/>
        <end position="315"/>
    </location>
</feature>
<feature type="turn" evidence="7">
    <location>
        <begin position="319"/>
        <end position="321"/>
    </location>
</feature>
<feature type="strand" evidence="7">
    <location>
        <begin position="322"/>
        <end position="324"/>
    </location>
</feature>
<feature type="helix" evidence="11">
    <location>
        <begin position="338"/>
        <end position="340"/>
    </location>
</feature>
<feature type="helix" evidence="8">
    <location>
        <begin position="343"/>
        <end position="345"/>
    </location>
</feature>
<feature type="helix" evidence="7">
    <location>
        <begin position="350"/>
        <end position="367"/>
    </location>
</feature>
<feature type="strand" evidence="7">
    <location>
        <begin position="372"/>
        <end position="375"/>
    </location>
</feature>
<feature type="helix" evidence="7">
    <location>
        <begin position="377"/>
        <end position="379"/>
    </location>
</feature>
<feature type="strand" evidence="8">
    <location>
        <begin position="386"/>
        <end position="388"/>
    </location>
</feature>
<feature type="strand" evidence="7">
    <location>
        <begin position="395"/>
        <end position="397"/>
    </location>
</feature>
<proteinExistence type="evidence at protein level"/>
<dbReference type="EC" id="1.14.15.15" evidence="3"/>
<dbReference type="EMBL" id="AB456955">
    <property type="protein sequence ID" value="BAH58688.1"/>
    <property type="molecule type" value="Genomic_DNA"/>
</dbReference>
<dbReference type="RefSeq" id="WP_085916811.1">
    <property type="nucleotide sequence ID" value="NZ_AP018920.1"/>
</dbReference>
<dbReference type="PDB" id="3A4G">
    <property type="method" value="X-ray"/>
    <property type="resolution" value="1.75 A"/>
    <property type="chains" value="A=1-403"/>
</dbReference>
<dbReference type="PDB" id="3A4H">
    <property type="method" value="X-ray"/>
    <property type="resolution" value="3.06 A"/>
    <property type="chains" value="A=1-403"/>
</dbReference>
<dbReference type="PDB" id="3A4Z">
    <property type="method" value="X-ray"/>
    <property type="resolution" value="2.20 A"/>
    <property type="chains" value="A/B/C/D/E=1-403"/>
</dbReference>
<dbReference type="PDB" id="3A50">
    <property type="method" value="X-ray"/>
    <property type="resolution" value="2.05 A"/>
    <property type="chains" value="A/B/C/D/E=1-403"/>
</dbReference>
<dbReference type="PDB" id="3A51">
    <property type="method" value="X-ray"/>
    <property type="resolution" value="2.00 A"/>
    <property type="chains" value="A/B/C/D/E=1-403"/>
</dbReference>
<dbReference type="PDB" id="3VRM">
    <property type="method" value="X-ray"/>
    <property type="resolution" value="2.57 A"/>
    <property type="chains" value="A=1-403"/>
</dbReference>
<dbReference type="PDB" id="5GNL">
    <property type="method" value="X-ray"/>
    <property type="resolution" value="1.95 A"/>
    <property type="chains" value="A=1-403"/>
</dbReference>
<dbReference type="PDB" id="5GNM">
    <property type="method" value="X-ray"/>
    <property type="resolution" value="2.70 A"/>
    <property type="chains" value="A/B/C/D=1-403"/>
</dbReference>
<dbReference type="PDBsum" id="3A4G"/>
<dbReference type="PDBsum" id="3A4H"/>
<dbReference type="PDBsum" id="3A4Z"/>
<dbReference type="PDBsum" id="3A50"/>
<dbReference type="PDBsum" id="3A51"/>
<dbReference type="PDBsum" id="3VRM"/>
<dbReference type="PDBsum" id="5GNL"/>
<dbReference type="PDBsum" id="5GNM"/>
<dbReference type="SMR" id="C4B644"/>
<dbReference type="STRING" id="2074.BG845_06796"/>
<dbReference type="OrthoDB" id="142769at2"/>
<dbReference type="BRENDA" id="1.14.14.24">
    <property type="organism ID" value="309"/>
</dbReference>
<dbReference type="SABIO-RK" id="C4B644"/>
<dbReference type="EvolutionaryTrace" id="C4B644"/>
<dbReference type="GO" id="GO:0005737">
    <property type="term" value="C:cytoplasm"/>
    <property type="evidence" value="ECO:0007669"/>
    <property type="project" value="UniProtKB-SubCell"/>
</dbReference>
<dbReference type="GO" id="GO:0047748">
    <property type="term" value="F:cholestanetetraol 26-dehydrogenase activity"/>
    <property type="evidence" value="ECO:0007669"/>
    <property type="project" value="UniProtKB-EC"/>
</dbReference>
<dbReference type="GO" id="GO:0020037">
    <property type="term" value="F:heme binding"/>
    <property type="evidence" value="ECO:0007669"/>
    <property type="project" value="InterPro"/>
</dbReference>
<dbReference type="GO" id="GO:0005506">
    <property type="term" value="F:iron ion binding"/>
    <property type="evidence" value="ECO:0007669"/>
    <property type="project" value="InterPro"/>
</dbReference>
<dbReference type="CDD" id="cd11029">
    <property type="entry name" value="CYP107-like"/>
    <property type="match status" value="1"/>
</dbReference>
<dbReference type="FunFam" id="1.10.630.10:FF:000018">
    <property type="entry name" value="Cytochrome P450 monooxygenase"/>
    <property type="match status" value="1"/>
</dbReference>
<dbReference type="Gene3D" id="1.10.630.10">
    <property type="entry name" value="Cytochrome P450"/>
    <property type="match status" value="1"/>
</dbReference>
<dbReference type="InterPro" id="IPR001128">
    <property type="entry name" value="Cyt_P450"/>
</dbReference>
<dbReference type="InterPro" id="IPR002397">
    <property type="entry name" value="Cyt_P450_B"/>
</dbReference>
<dbReference type="InterPro" id="IPR017972">
    <property type="entry name" value="Cyt_P450_CS"/>
</dbReference>
<dbReference type="InterPro" id="IPR036396">
    <property type="entry name" value="Cyt_P450_sf"/>
</dbReference>
<dbReference type="PANTHER" id="PTHR46696:SF1">
    <property type="entry name" value="CYTOCHROME P450 YJIB-RELATED"/>
    <property type="match status" value="1"/>
</dbReference>
<dbReference type="PANTHER" id="PTHR46696">
    <property type="entry name" value="P450, PUTATIVE (EUROFUNG)-RELATED"/>
    <property type="match status" value="1"/>
</dbReference>
<dbReference type="Pfam" id="PF00067">
    <property type="entry name" value="p450"/>
    <property type="match status" value="1"/>
</dbReference>
<dbReference type="PRINTS" id="PR00359">
    <property type="entry name" value="BP450"/>
</dbReference>
<dbReference type="SUPFAM" id="SSF48264">
    <property type="entry name" value="Cytochrome P450"/>
    <property type="match status" value="1"/>
</dbReference>
<dbReference type="PROSITE" id="PS00086">
    <property type="entry name" value="CYTOCHROME_P450"/>
    <property type="match status" value="1"/>
</dbReference>
<name>CPVDH_PSEAH</name>
<comment type="function">
    <text evidence="3">Hydroxylates vitamin D(3) into 25-hydroxyvitamin D(3) and 1-alpha,25-dihydroxyvitamin D(3), its physiologically active forms. It first hydroxylates the C-25 position of vitamin D(3) to form 25-hydroxyvitamin D(3), then subsequently hydroxylates the C-1-alpha position to form 1-alpha,25-dihydroxyvitamin D(3). Also displays 25-hydroxylase activity on vitamin D(2) and 7-dehydrocholesterol. May play a role in the biosynthesis of steroid metabolic intermediates.</text>
</comment>
<comment type="catalytic activity">
    <reaction evidence="3">
        <text>5beta-cholestane-3alpha,7alpha,12alpha-triol + 6 reduced [adrenodoxin] + 3 O2 + 5 H(+) = (25R)-3alpha,7alpha,12alpha-trihydroxy-5beta-cholestan-26-oate + 6 oxidized [adrenodoxin] + 4 H2O</text>
        <dbReference type="Rhea" id="RHEA:34631"/>
        <dbReference type="Rhea" id="RHEA-COMP:9998"/>
        <dbReference type="Rhea" id="RHEA-COMP:9999"/>
        <dbReference type="ChEBI" id="CHEBI:15377"/>
        <dbReference type="ChEBI" id="CHEBI:15378"/>
        <dbReference type="ChEBI" id="CHEBI:15379"/>
        <dbReference type="ChEBI" id="CHEBI:16496"/>
        <dbReference type="ChEBI" id="CHEBI:33737"/>
        <dbReference type="ChEBI" id="CHEBI:33738"/>
        <dbReference type="ChEBI" id="CHEBI:58734"/>
        <dbReference type="EC" id="1.14.15.15"/>
    </reaction>
</comment>
<comment type="cofactor">
    <cofactor evidence="1">
        <name>heme</name>
        <dbReference type="ChEBI" id="CHEBI:30413"/>
    </cofactor>
</comment>
<comment type="activity regulation">
    <text evidence="3">Activated by partially methylated beta-cyclodextrin.</text>
</comment>
<comment type="biophysicochemical properties">
    <kinetics>
        <KM evidence="3">13.5 uM for vitamin D(3)</KM>
        <KM evidence="3">7.1 uM for 25-hydroxyvitamin D(3)</KM>
    </kinetics>
</comment>
<comment type="subcellular location">
    <subcellularLocation>
        <location evidence="1">Cytoplasm</location>
    </subcellularLocation>
</comment>
<comment type="similarity">
    <text evidence="2">Belongs to the cytochrome P450 family.</text>
</comment>
<evidence type="ECO:0000250" key="1">
    <source>
        <dbReference type="UniProtKB" id="P0A512"/>
    </source>
</evidence>
<evidence type="ECO:0000255" key="2"/>
<evidence type="ECO:0000269" key="3">
    <source>
    </source>
</evidence>
<evidence type="ECO:0000303" key="4">
    <source>
    </source>
</evidence>
<evidence type="ECO:0000305" key="5"/>
<evidence type="ECO:0000312" key="6">
    <source>
        <dbReference type="EMBL" id="BAH58688.1"/>
    </source>
</evidence>
<evidence type="ECO:0007829" key="7">
    <source>
        <dbReference type="PDB" id="3A4G"/>
    </source>
</evidence>
<evidence type="ECO:0007829" key="8">
    <source>
        <dbReference type="PDB" id="3A51"/>
    </source>
</evidence>
<evidence type="ECO:0007829" key="9">
    <source>
        <dbReference type="PDB" id="3VRM"/>
    </source>
</evidence>
<evidence type="ECO:0007829" key="10">
    <source>
        <dbReference type="PDB" id="5GNL"/>
    </source>
</evidence>
<evidence type="ECO:0007829" key="11">
    <source>
        <dbReference type="PDB" id="5GNM"/>
    </source>
</evidence>
<organism>
    <name type="scientific">Pseudonocardia autotrophica</name>
    <name type="common">Amycolata autotrophica</name>
    <name type="synonym">Nocardia autotrophica</name>
    <dbReference type="NCBI Taxonomy" id="2074"/>
    <lineage>
        <taxon>Bacteria</taxon>
        <taxon>Bacillati</taxon>
        <taxon>Actinomycetota</taxon>
        <taxon>Actinomycetes</taxon>
        <taxon>Pseudonocardiales</taxon>
        <taxon>Pseudonocardiaceae</taxon>
        <taxon>Pseudonocardia</taxon>
    </lineage>
</organism>
<keyword id="KW-0002">3D-structure</keyword>
<keyword id="KW-0963">Cytoplasm</keyword>
<keyword id="KW-0903">Direct protein sequencing</keyword>
<keyword id="KW-0349">Heme</keyword>
<keyword id="KW-0408">Iron</keyword>
<keyword id="KW-0479">Metal-binding</keyword>
<keyword id="KW-0503">Monooxygenase</keyword>
<keyword id="KW-0560">Oxidoreductase</keyword>
<gene>
    <name evidence="6" type="primary">vdh</name>
</gene>
<sequence length="403" mass="44369">MALTTTGTEQHDLFSGTFWQNPHPAYAALRAEDPVRKLALPDGPVWLLTRYADVREAFVDPRLSKDWRHTLPEDQRADMPATPTPMMILMDPPDHTRLRKLVGRSFTVRRMNELEPRITEIADGLLAGLPTDGPVDLMREYAFQIPVQVICELLGVPAEDRDDFSAWSSVLVDDSPADDKNAAMGKLHGYLSDLLERKRTEPDDALLSSLLAVSDEDGDRLSQEELVAMAMLLLIAGHETTVNLIGNGVLALLTHPDQRKLLAEDPSLISSAVEEFLRFDSPVSQAPIRFTAEDVTYSGVTIPAGEMVMLGLAAANRDADWMPEPDRLDITRDASGGVFFGHGIHFCLGAQLARLEGRVAIGRLFADRPELALAVGLDELVYRESTLVRGLSRMPVTMGPRSA</sequence>